<sequence length="63" mass="7188">KEGYPVDWGNCKYECMSDEYCKDLCADRKATSGYCYKLNWSCYCKGLPDDSPIKTPGKCRSGR</sequence>
<proteinExistence type="evidence at transcript level"/>
<accession>E7CLP0</accession>
<keyword id="KW-1015">Disulfide bond</keyword>
<keyword id="KW-0872">Ion channel impairing toxin</keyword>
<keyword id="KW-0528">Neurotoxin</keyword>
<keyword id="KW-0964">Secreted</keyword>
<keyword id="KW-0800">Toxin</keyword>
<keyword id="KW-0738">Voltage-gated sodium channel impairing toxin</keyword>
<comment type="function">
    <text evidence="1">Alpha toxins bind voltage-independently at site-3 of sodium channels (Nav) and inhibits the inactivation of the activated channels, thereby blocking neuronal transmission.</text>
</comment>
<comment type="subcellular location">
    <subcellularLocation>
        <location evidence="2">Secreted</location>
    </subcellularLocation>
</comment>
<comment type="tissue specificity">
    <text evidence="6">Expressed by the venom gland.</text>
</comment>
<comment type="domain">
    <text evidence="5">Has the structural arrangement of an alpha-helix connected to antiparallel beta-sheets by disulfide bonds (CS-alpha/beta).</text>
</comment>
<comment type="similarity">
    <text evidence="3">Belongs to the long (4 C-C) scorpion toxin superfamily. Sodium channel inhibitor family. Alpha subfamily.</text>
</comment>
<reference key="1">
    <citation type="journal article" date="2011" name="Toxicon">
        <title>Biochemical and molecular characterization of the venom from the Cuban scorpion Rhopalurus junceus.</title>
        <authorList>
            <person name="Garcia-Gomez B.I."/>
            <person name="Coronas F.I."/>
            <person name="Restano-Cassulini R."/>
            <person name="Rodriguez R.R."/>
            <person name="Possani L.D."/>
        </authorList>
    </citation>
    <scope>NUCLEOTIDE SEQUENCE [MRNA]</scope>
    <source>
        <tissue>Venom gland</tissue>
    </source>
</reference>
<organism>
    <name type="scientific">Rhopalurus junceus</name>
    <name type="common">Caribbean blue scorpion</name>
    <dbReference type="NCBI Taxonomy" id="419285"/>
    <lineage>
        <taxon>Eukaryota</taxon>
        <taxon>Metazoa</taxon>
        <taxon>Ecdysozoa</taxon>
        <taxon>Arthropoda</taxon>
        <taxon>Chelicerata</taxon>
        <taxon>Arachnida</taxon>
        <taxon>Scorpiones</taxon>
        <taxon>Buthida</taxon>
        <taxon>Buthoidea</taxon>
        <taxon>Buthidae</taxon>
        <taxon>Rhopalurus</taxon>
    </lineage>
</organism>
<evidence type="ECO:0000250" key="1"/>
<evidence type="ECO:0000250" key="2">
    <source>
        <dbReference type="UniProtKB" id="P46066"/>
    </source>
</evidence>
<evidence type="ECO:0000255" key="3"/>
<evidence type="ECO:0000255" key="4">
    <source>
        <dbReference type="PROSITE-ProRule" id="PRU01210"/>
    </source>
</evidence>
<evidence type="ECO:0000305" key="5"/>
<evidence type="ECO:0000305" key="6">
    <source>
    </source>
</evidence>
<evidence type="ECO:0000312" key="7">
    <source>
        <dbReference type="EMBL" id="ADV16827.1"/>
    </source>
</evidence>
<name>SCX9_RHOJU</name>
<dbReference type="EMBL" id="HM233949">
    <property type="protein sequence ID" value="ADV16827.1"/>
    <property type="molecule type" value="mRNA"/>
</dbReference>
<dbReference type="SMR" id="E7CLP0"/>
<dbReference type="GO" id="GO:0005576">
    <property type="term" value="C:extracellular region"/>
    <property type="evidence" value="ECO:0007669"/>
    <property type="project" value="UniProtKB-SubCell"/>
</dbReference>
<dbReference type="GO" id="GO:0019871">
    <property type="term" value="F:sodium channel inhibitor activity"/>
    <property type="evidence" value="ECO:0007669"/>
    <property type="project" value="InterPro"/>
</dbReference>
<dbReference type="GO" id="GO:0090729">
    <property type="term" value="F:toxin activity"/>
    <property type="evidence" value="ECO:0007669"/>
    <property type="project" value="UniProtKB-KW"/>
</dbReference>
<dbReference type="GO" id="GO:0006952">
    <property type="term" value="P:defense response"/>
    <property type="evidence" value="ECO:0007669"/>
    <property type="project" value="InterPro"/>
</dbReference>
<dbReference type="CDD" id="cd23106">
    <property type="entry name" value="neurotoxins_LC_scorpion"/>
    <property type="match status" value="1"/>
</dbReference>
<dbReference type="Gene3D" id="3.30.30.10">
    <property type="entry name" value="Knottin, scorpion toxin-like"/>
    <property type="match status" value="1"/>
</dbReference>
<dbReference type="InterPro" id="IPR044062">
    <property type="entry name" value="LCN-type_CS_alpha_beta_dom"/>
</dbReference>
<dbReference type="InterPro" id="IPR003614">
    <property type="entry name" value="Scorpion_toxin-like"/>
</dbReference>
<dbReference type="InterPro" id="IPR036574">
    <property type="entry name" value="Scorpion_toxin-like_sf"/>
</dbReference>
<dbReference type="InterPro" id="IPR018218">
    <property type="entry name" value="Scorpion_toxinL"/>
</dbReference>
<dbReference type="InterPro" id="IPR002061">
    <property type="entry name" value="Scorpion_toxinL/defensin"/>
</dbReference>
<dbReference type="Pfam" id="PF00537">
    <property type="entry name" value="Toxin_3"/>
    <property type="match status" value="1"/>
</dbReference>
<dbReference type="PRINTS" id="PR00285">
    <property type="entry name" value="SCORPNTOXIN"/>
</dbReference>
<dbReference type="SMART" id="SM00505">
    <property type="entry name" value="Knot1"/>
    <property type="match status" value="1"/>
</dbReference>
<dbReference type="SUPFAM" id="SSF57095">
    <property type="entry name" value="Scorpion toxin-like"/>
    <property type="match status" value="1"/>
</dbReference>
<dbReference type="PROSITE" id="PS51863">
    <property type="entry name" value="LCN_CSAB"/>
    <property type="match status" value="1"/>
</dbReference>
<feature type="chain" id="PRO_0000413459" description="Putative alpha-neurotoxin RjAa9">
    <location>
        <begin position="1"/>
        <end position="63"/>
    </location>
</feature>
<feature type="domain" description="LCN-type CS-alpha/beta" evidence="4">
    <location>
        <begin position="1"/>
        <end position="60"/>
    </location>
</feature>
<feature type="disulfide bond" evidence="4">
    <location>
        <begin position="11"/>
        <end position="59"/>
    </location>
</feature>
<feature type="disulfide bond" evidence="4">
    <location>
        <begin position="15"/>
        <end position="35"/>
    </location>
</feature>
<feature type="disulfide bond" evidence="4">
    <location>
        <begin position="21"/>
        <end position="42"/>
    </location>
</feature>
<feature type="disulfide bond" evidence="4">
    <location>
        <begin position="25"/>
        <end position="44"/>
    </location>
</feature>
<feature type="non-terminal residue" evidence="7">
    <location>
        <position position="1"/>
    </location>
</feature>
<protein>
    <recommendedName>
        <fullName evidence="6">Putative alpha-neurotoxin RjAa9</fullName>
    </recommendedName>
</protein>